<feature type="chain" id="PRO_0000386905" description="Ribosomal RNA small subunit methyltransferase H">
    <location>
        <begin position="1"/>
        <end position="327"/>
    </location>
</feature>
<feature type="region of interest" description="Disordered" evidence="2">
    <location>
        <begin position="286"/>
        <end position="327"/>
    </location>
</feature>
<feature type="binding site" evidence="1">
    <location>
        <begin position="36"/>
        <end position="38"/>
    </location>
    <ligand>
        <name>S-adenosyl-L-methionine</name>
        <dbReference type="ChEBI" id="CHEBI:59789"/>
    </ligand>
</feature>
<feature type="binding site" evidence="1">
    <location>
        <position position="55"/>
    </location>
    <ligand>
        <name>S-adenosyl-L-methionine</name>
        <dbReference type="ChEBI" id="CHEBI:59789"/>
    </ligand>
</feature>
<feature type="binding site" evidence="1">
    <location>
        <position position="89"/>
    </location>
    <ligand>
        <name>S-adenosyl-L-methionine</name>
        <dbReference type="ChEBI" id="CHEBI:59789"/>
    </ligand>
</feature>
<feature type="binding site" evidence="1">
    <location>
        <position position="103"/>
    </location>
    <ligand>
        <name>S-adenosyl-L-methionine</name>
        <dbReference type="ChEBI" id="CHEBI:59789"/>
    </ligand>
</feature>
<feature type="binding site" evidence="1">
    <location>
        <position position="110"/>
    </location>
    <ligand>
        <name>S-adenosyl-L-methionine</name>
        <dbReference type="ChEBI" id="CHEBI:59789"/>
    </ligand>
</feature>
<protein>
    <recommendedName>
        <fullName evidence="1">Ribosomal RNA small subunit methyltransferase H</fullName>
        <ecNumber evidence="1">2.1.1.199</ecNumber>
    </recommendedName>
    <alternativeName>
        <fullName evidence="1">16S rRNA m(4)C1402 methyltransferase</fullName>
    </alternativeName>
    <alternativeName>
        <fullName evidence="1">rRNA (cytosine-N(4)-)-methyltransferase RsmH</fullName>
    </alternativeName>
</protein>
<evidence type="ECO:0000255" key="1">
    <source>
        <dbReference type="HAMAP-Rule" id="MF_01007"/>
    </source>
</evidence>
<evidence type="ECO:0000256" key="2">
    <source>
        <dbReference type="SAM" id="MobiDB-lite"/>
    </source>
</evidence>
<proteinExistence type="inferred from homology"/>
<accession>A8KZA9</accession>
<name>RSMH_PARS2</name>
<organism>
    <name type="scientific">Parafrankia sp. (strain EAN1pec)</name>
    <dbReference type="NCBI Taxonomy" id="298653"/>
    <lineage>
        <taxon>Bacteria</taxon>
        <taxon>Bacillati</taxon>
        <taxon>Actinomycetota</taxon>
        <taxon>Actinomycetes</taxon>
        <taxon>Frankiales</taxon>
        <taxon>Frankiaceae</taxon>
        <taxon>Parafrankia</taxon>
    </lineage>
</organism>
<comment type="function">
    <text evidence="1">Specifically methylates the N4 position of cytidine in position 1402 (C1402) of 16S rRNA.</text>
</comment>
<comment type="catalytic activity">
    <reaction evidence="1">
        <text>cytidine(1402) in 16S rRNA + S-adenosyl-L-methionine = N(4)-methylcytidine(1402) in 16S rRNA + S-adenosyl-L-homocysteine + H(+)</text>
        <dbReference type="Rhea" id="RHEA:42928"/>
        <dbReference type="Rhea" id="RHEA-COMP:10286"/>
        <dbReference type="Rhea" id="RHEA-COMP:10287"/>
        <dbReference type="ChEBI" id="CHEBI:15378"/>
        <dbReference type="ChEBI" id="CHEBI:57856"/>
        <dbReference type="ChEBI" id="CHEBI:59789"/>
        <dbReference type="ChEBI" id="CHEBI:74506"/>
        <dbReference type="ChEBI" id="CHEBI:82748"/>
        <dbReference type="EC" id="2.1.1.199"/>
    </reaction>
</comment>
<comment type="subcellular location">
    <subcellularLocation>
        <location evidence="1">Cytoplasm</location>
    </subcellularLocation>
</comment>
<comment type="similarity">
    <text evidence="1">Belongs to the methyltransferase superfamily. RsmH family.</text>
</comment>
<gene>
    <name evidence="1" type="primary">rsmH</name>
    <name type="synonym">mraW</name>
    <name type="ordered locus">Franean1_5106</name>
</gene>
<keyword id="KW-0963">Cytoplasm</keyword>
<keyword id="KW-0489">Methyltransferase</keyword>
<keyword id="KW-0698">rRNA processing</keyword>
<keyword id="KW-0949">S-adenosyl-L-methionine</keyword>
<keyword id="KW-0808">Transferase</keyword>
<dbReference type="EC" id="2.1.1.199" evidence="1"/>
<dbReference type="EMBL" id="CP000820">
    <property type="protein sequence ID" value="ABW14465.1"/>
    <property type="molecule type" value="Genomic_DNA"/>
</dbReference>
<dbReference type="RefSeq" id="WP_020462580.1">
    <property type="nucleotide sequence ID" value="NC_009921.1"/>
</dbReference>
<dbReference type="SMR" id="A8KZA9"/>
<dbReference type="STRING" id="298653.Franean1_5106"/>
<dbReference type="KEGG" id="fre:Franean1_5106"/>
<dbReference type="eggNOG" id="COG0275">
    <property type="taxonomic scope" value="Bacteria"/>
</dbReference>
<dbReference type="HOGENOM" id="CLU_038422_0_0_11"/>
<dbReference type="GO" id="GO:0005737">
    <property type="term" value="C:cytoplasm"/>
    <property type="evidence" value="ECO:0007669"/>
    <property type="project" value="UniProtKB-SubCell"/>
</dbReference>
<dbReference type="GO" id="GO:0071424">
    <property type="term" value="F:rRNA (cytosine-N4-)-methyltransferase activity"/>
    <property type="evidence" value="ECO:0007669"/>
    <property type="project" value="UniProtKB-UniRule"/>
</dbReference>
<dbReference type="GO" id="GO:0070475">
    <property type="term" value="P:rRNA base methylation"/>
    <property type="evidence" value="ECO:0007669"/>
    <property type="project" value="UniProtKB-UniRule"/>
</dbReference>
<dbReference type="FunFam" id="1.10.150.170:FF:000001">
    <property type="entry name" value="Ribosomal RNA small subunit methyltransferase H"/>
    <property type="match status" value="1"/>
</dbReference>
<dbReference type="Gene3D" id="1.10.150.170">
    <property type="entry name" value="Putative methyltransferase TM0872, insert domain"/>
    <property type="match status" value="1"/>
</dbReference>
<dbReference type="Gene3D" id="3.40.50.150">
    <property type="entry name" value="Vaccinia Virus protein VP39"/>
    <property type="match status" value="1"/>
</dbReference>
<dbReference type="HAMAP" id="MF_01007">
    <property type="entry name" value="16SrRNA_methyltr_H"/>
    <property type="match status" value="1"/>
</dbReference>
<dbReference type="InterPro" id="IPR002903">
    <property type="entry name" value="RsmH"/>
</dbReference>
<dbReference type="InterPro" id="IPR023397">
    <property type="entry name" value="SAM-dep_MeTrfase_MraW_recog"/>
</dbReference>
<dbReference type="InterPro" id="IPR029063">
    <property type="entry name" value="SAM-dependent_MTases_sf"/>
</dbReference>
<dbReference type="NCBIfam" id="TIGR00006">
    <property type="entry name" value="16S rRNA (cytosine(1402)-N(4))-methyltransferase RsmH"/>
    <property type="match status" value="1"/>
</dbReference>
<dbReference type="PANTHER" id="PTHR11265:SF0">
    <property type="entry name" value="12S RRNA N4-METHYLCYTIDINE METHYLTRANSFERASE"/>
    <property type="match status" value="1"/>
</dbReference>
<dbReference type="PANTHER" id="PTHR11265">
    <property type="entry name" value="S-ADENOSYL-METHYLTRANSFERASE MRAW"/>
    <property type="match status" value="1"/>
</dbReference>
<dbReference type="Pfam" id="PF01795">
    <property type="entry name" value="Methyltransf_5"/>
    <property type="match status" value="1"/>
</dbReference>
<dbReference type="PIRSF" id="PIRSF004486">
    <property type="entry name" value="MraW"/>
    <property type="match status" value="1"/>
</dbReference>
<dbReference type="SUPFAM" id="SSF81799">
    <property type="entry name" value="Putative methyltransferase TM0872, insert domain"/>
    <property type="match status" value="1"/>
</dbReference>
<dbReference type="SUPFAM" id="SSF53335">
    <property type="entry name" value="S-adenosyl-L-methionine-dependent methyltransferases"/>
    <property type="match status" value="1"/>
</dbReference>
<reference key="1">
    <citation type="journal article" date="2007" name="Genome Res.">
        <title>Genome characteristics of facultatively symbiotic Frankia sp. strains reflect host range and host plant biogeography.</title>
        <authorList>
            <person name="Normand P."/>
            <person name="Lapierre P."/>
            <person name="Tisa L.S."/>
            <person name="Gogarten J.P."/>
            <person name="Alloisio N."/>
            <person name="Bagnarol E."/>
            <person name="Bassi C.A."/>
            <person name="Berry A.M."/>
            <person name="Bickhart D.M."/>
            <person name="Choisne N."/>
            <person name="Couloux A."/>
            <person name="Cournoyer B."/>
            <person name="Cruveiller S."/>
            <person name="Daubin V."/>
            <person name="Demange N."/>
            <person name="Francino M.P."/>
            <person name="Goltsman E."/>
            <person name="Huang Y."/>
            <person name="Kopp O.R."/>
            <person name="Labarre L."/>
            <person name="Lapidus A."/>
            <person name="Lavire C."/>
            <person name="Marechal J."/>
            <person name="Martinez M."/>
            <person name="Mastronunzio J.E."/>
            <person name="Mullin B.C."/>
            <person name="Niemann J."/>
            <person name="Pujic P."/>
            <person name="Rawnsley T."/>
            <person name="Rouy Z."/>
            <person name="Schenowitz C."/>
            <person name="Sellstedt A."/>
            <person name="Tavares F."/>
            <person name="Tomkins J.P."/>
            <person name="Vallenet D."/>
            <person name="Valverde C."/>
            <person name="Wall L.G."/>
            <person name="Wang Y."/>
            <person name="Medigue C."/>
            <person name="Benson D.R."/>
        </authorList>
    </citation>
    <scope>NUCLEOTIDE SEQUENCE [LARGE SCALE GENOMIC DNA]</scope>
    <source>
        <strain>EAN1pec</strain>
    </source>
</reference>
<sequence>MDVTHTPVLTERVIQLLDPALRRPGAVVVDATVGLGGHSHALLEAFPQVRLIGLDRDTTALEHSRRRLTGLGDRVDLEHAVYDQLPDVLDRLGVPSVDGVLFDLGVSSMQLDLDERGFAYSRDAPLDMRMDQERGPTAADVLNNYDVDALTRVLREYGEERFARRIARAVVTQRQAAPFTTSARLVDLVRDSIPAAARRTGGNPAKRTFQALRIEVNSELEVLERAVPAAFDALAVAGRLVVLSYHSLEDRLVKRVLMPRSVPSVPPDMPVIPDDARPTLRWLTRGAEPASDTEIEQNARAGSVRLRAAERTAAEPGRAHNPTGGVR</sequence>